<gene>
    <name type="primary">ALS6</name>
    <name type="synonym">ALS97</name>
    <name type="ordered locus">CAALFM_C306190CA</name>
    <name type="ORF">CaO19.7414</name>
</gene>
<accession>Q5A2Z7</accession>
<accession>A0A1D8PKF9</accession>
<accession>B1PKX7</accession>
<accession>Q873Q8</accession>
<feature type="signal peptide" evidence="2">
    <location>
        <begin position="1"/>
        <end position="18"/>
    </location>
</feature>
<feature type="chain" id="PRO_0000420224" description="Agglutinin-like protein 6">
    <location>
        <begin position="19"/>
        <end position="1345"/>
    </location>
</feature>
<feature type="propeptide" id="PRO_0000420225" description="Removed in mature form" evidence="2">
    <location>
        <begin position="1346"/>
        <end position="1366"/>
    </location>
</feature>
<feature type="repeat" description="ALS 1">
    <location>
        <begin position="368"/>
        <end position="399"/>
    </location>
</feature>
<feature type="repeat" description="ALS 2">
    <location>
        <begin position="404"/>
        <end position="435"/>
    </location>
</feature>
<feature type="repeat" description="ALS 3">
    <location>
        <begin position="441"/>
        <end position="472"/>
    </location>
</feature>
<feature type="repeat" description="ALS 4">
    <location>
        <begin position="477"/>
        <end position="508"/>
    </location>
</feature>
<feature type="repeat" description="ALS 5">
    <location>
        <begin position="513"/>
        <end position="544"/>
    </location>
</feature>
<feature type="repeat" description="ALS 6">
    <location>
        <begin position="549"/>
        <end position="580"/>
    </location>
</feature>
<feature type="region of interest" description="Disordered" evidence="3">
    <location>
        <begin position="449"/>
        <end position="470"/>
    </location>
</feature>
<feature type="region of interest" description="Disordered" evidence="3">
    <location>
        <begin position="583"/>
        <end position="658"/>
    </location>
</feature>
<feature type="region of interest" description="Disordered" evidence="3">
    <location>
        <begin position="758"/>
        <end position="780"/>
    </location>
</feature>
<feature type="region of interest" description="Disordered" evidence="3">
    <location>
        <begin position="804"/>
        <end position="833"/>
    </location>
</feature>
<feature type="region of interest" description="Disordered" evidence="3">
    <location>
        <begin position="874"/>
        <end position="915"/>
    </location>
</feature>
<feature type="region of interest" description="Disordered" evidence="3">
    <location>
        <begin position="928"/>
        <end position="976"/>
    </location>
</feature>
<feature type="region of interest" description="Disordered" evidence="3">
    <location>
        <begin position="996"/>
        <end position="1040"/>
    </location>
</feature>
<feature type="region of interest" description="Disordered" evidence="3">
    <location>
        <begin position="1081"/>
        <end position="1130"/>
    </location>
</feature>
<feature type="region of interest" description="Disordered" evidence="3">
    <location>
        <begin position="1158"/>
        <end position="1218"/>
    </location>
</feature>
<feature type="compositionally biased region" description="Low complexity" evidence="3">
    <location>
        <begin position="451"/>
        <end position="464"/>
    </location>
</feature>
<feature type="compositionally biased region" description="Low complexity" evidence="3">
    <location>
        <begin position="758"/>
        <end position="775"/>
    </location>
</feature>
<feature type="compositionally biased region" description="Low complexity" evidence="3">
    <location>
        <begin position="805"/>
        <end position="833"/>
    </location>
</feature>
<feature type="compositionally biased region" description="Low complexity" evidence="3">
    <location>
        <begin position="875"/>
        <end position="889"/>
    </location>
</feature>
<feature type="compositionally biased region" description="Low complexity" evidence="3">
    <location>
        <begin position="898"/>
        <end position="915"/>
    </location>
</feature>
<feature type="compositionally biased region" description="Low complexity" evidence="3">
    <location>
        <begin position="940"/>
        <end position="958"/>
    </location>
</feature>
<feature type="compositionally biased region" description="Polar residues" evidence="3">
    <location>
        <begin position="959"/>
        <end position="969"/>
    </location>
</feature>
<feature type="compositionally biased region" description="Low complexity" evidence="3">
    <location>
        <begin position="996"/>
        <end position="1021"/>
    </location>
</feature>
<feature type="compositionally biased region" description="Polar residues" evidence="3">
    <location>
        <begin position="1022"/>
        <end position="1040"/>
    </location>
</feature>
<feature type="compositionally biased region" description="Polar residues" evidence="3">
    <location>
        <begin position="1085"/>
        <end position="1107"/>
    </location>
</feature>
<feature type="compositionally biased region" description="Low complexity" evidence="3">
    <location>
        <begin position="1121"/>
        <end position="1130"/>
    </location>
</feature>
<feature type="compositionally biased region" description="Low complexity" evidence="3">
    <location>
        <begin position="1158"/>
        <end position="1177"/>
    </location>
</feature>
<feature type="compositionally biased region" description="Polar residues" evidence="3">
    <location>
        <begin position="1192"/>
        <end position="1202"/>
    </location>
</feature>
<feature type="compositionally biased region" description="Polar residues" evidence="3">
    <location>
        <begin position="1209"/>
        <end position="1218"/>
    </location>
</feature>
<feature type="lipid moiety-binding region" description="GPI-anchor amidated serine" evidence="2">
    <location>
        <position position="1345"/>
    </location>
</feature>
<feature type="glycosylation site" description="N-linked (GlcNAc...) asparagine" evidence="2">
    <location>
        <position position="294"/>
    </location>
</feature>
<feature type="glycosylation site" description="N-linked (GlcNAc...) asparagine" evidence="2">
    <location>
        <position position="596"/>
    </location>
</feature>
<feature type="glycosylation site" description="N-linked (GlcNAc...) asparagine" evidence="2">
    <location>
        <position position="866"/>
    </location>
</feature>
<feature type="glycosylation site" description="N-linked (GlcNAc...) asparagine" evidence="2">
    <location>
        <position position="1273"/>
    </location>
</feature>
<feature type="disulfide bond" evidence="1">
    <location>
        <begin position="74"/>
        <end position="151"/>
    </location>
</feature>
<feature type="disulfide bond" evidence="1">
    <location>
        <begin position="97"/>
        <end position="113"/>
    </location>
</feature>
<feature type="disulfide bond" evidence="1">
    <location>
        <begin position="206"/>
        <end position="301"/>
    </location>
</feature>
<feature type="disulfide bond" evidence="1">
    <location>
        <begin position="228"/>
        <end position="257"/>
    </location>
</feature>
<feature type="sequence variant" description="In allele ALS6-2." evidence="10">
    <original>L</original>
    <variation>S</variation>
    <location>
        <position position="70"/>
    </location>
</feature>
<feature type="sequence variant" description="In allele ALS6-2." evidence="10">
    <original>S</original>
    <variation>L</variation>
    <location>
        <position position="856"/>
    </location>
</feature>
<feature type="sequence variant" description="In allele ALS6-2." evidence="10">
    <original>I</original>
    <variation>V</variation>
    <location>
        <position position="907"/>
    </location>
</feature>
<feature type="sequence variant" description="In allele ALS6-2." evidence="10">
    <original>D</original>
    <variation>G</variation>
    <location>
        <position position="1230"/>
    </location>
</feature>
<feature type="sequence variant" description="In allele ALS6-2." evidence="10">
    <original>N</original>
    <variation>S</variation>
    <location>
        <position position="1238"/>
    </location>
</feature>
<feature type="sequence variant" description="In allele ALS6-2." evidence="10">
    <original>M</original>
    <variation>T</variation>
    <location>
        <position position="1302"/>
    </location>
</feature>
<feature type="sequence variant" description="In allele ALS6-2." evidence="10">
    <original>I</original>
    <variation>M</variation>
    <location>
        <position position="1310"/>
    </location>
</feature>
<feature type="sequence conflict" description="In Ref. 1; AAO72081." evidence="11" ref="1">
    <original>S</original>
    <variation>R</variation>
    <location>
        <position position="755"/>
    </location>
</feature>
<feature type="sequence conflict" description="In Ref. 1; AAO72081." evidence="11" ref="1">
    <original>S</original>
    <variation>F</variation>
    <location>
        <position position="763"/>
    </location>
</feature>
<name>ALS6_CANAL</name>
<reference key="1">
    <citation type="journal article" date="2007" name="Fungal Genet. Biol.">
        <title>Analysis of ALS5 and ALS6 allelic variability in a geographically diverse collection of Candida albicans isolates.</title>
        <authorList>
            <person name="Zhao X."/>
            <person name="Oh S.H."/>
            <person name="Jajko R."/>
            <person name="Diekema D.J."/>
            <person name="Pfaller M.A."/>
            <person name="Pujol C."/>
            <person name="Soll D.R."/>
            <person name="Hoyer L.L."/>
        </authorList>
    </citation>
    <scope>NUCLEOTIDE SEQUENCE [GENOMIC DNA]</scope>
    <source>
        <strain>SC5314 / ATCC MYA-2876</strain>
    </source>
</reference>
<reference key="2">
    <citation type="submission" date="2008-02" db="EMBL/GenBank/DDBJ databases">
        <title>Candida albicans SC5314 ALS6 second allele.</title>
        <authorList>
            <person name="Zhao X."/>
            <person name="Oh S.-H."/>
            <person name="Hoyer L.L."/>
        </authorList>
    </citation>
    <scope>NUCLEOTIDE SEQUENCE [GENOMIC DNA]</scope>
    <scope>VARIANTS</scope>
    <source>
        <strain>SC5314 / ATCC MYA-2876</strain>
    </source>
</reference>
<reference key="3">
    <citation type="journal article" date="2004" name="Proc. Natl. Acad. Sci. U.S.A.">
        <title>The diploid genome sequence of Candida albicans.</title>
        <authorList>
            <person name="Jones T."/>
            <person name="Federspiel N.A."/>
            <person name="Chibana H."/>
            <person name="Dungan J."/>
            <person name="Kalman S."/>
            <person name="Magee B.B."/>
            <person name="Newport G."/>
            <person name="Thorstenson Y.R."/>
            <person name="Agabian N."/>
            <person name="Magee P.T."/>
            <person name="Davis R.W."/>
            <person name="Scherer S."/>
        </authorList>
    </citation>
    <scope>NUCLEOTIDE SEQUENCE [LARGE SCALE GENOMIC DNA]</scope>
    <source>
        <strain>SC5314 / ATCC MYA-2876</strain>
    </source>
</reference>
<reference key="4">
    <citation type="journal article" date="2007" name="Genome Biol.">
        <title>Assembly of the Candida albicans genome into sixteen supercontigs aligned on the eight chromosomes.</title>
        <authorList>
            <person name="van het Hoog M."/>
            <person name="Rast T.J."/>
            <person name="Martchenko M."/>
            <person name="Grindle S."/>
            <person name="Dignard D."/>
            <person name="Hogues H."/>
            <person name="Cuomo C."/>
            <person name="Berriman M."/>
            <person name="Scherer S."/>
            <person name="Magee B.B."/>
            <person name="Whiteway M."/>
            <person name="Chibana H."/>
            <person name="Nantel A."/>
            <person name="Magee P.T."/>
        </authorList>
    </citation>
    <scope>GENOME REANNOTATION</scope>
    <source>
        <strain>SC5314 / ATCC MYA-2876</strain>
    </source>
</reference>
<reference key="5">
    <citation type="journal article" date="2013" name="Genome Biol.">
        <title>Assembly of a phased diploid Candida albicans genome facilitates allele-specific measurements and provides a simple model for repeat and indel structure.</title>
        <authorList>
            <person name="Muzzey D."/>
            <person name="Schwartz K."/>
            <person name="Weissman J.S."/>
            <person name="Sherlock G."/>
        </authorList>
    </citation>
    <scope>NUCLEOTIDE SEQUENCE [LARGE SCALE GENOMIC DNA]</scope>
    <scope>GENOME REANNOTATION</scope>
    <source>
        <strain>SC5314 / ATCC MYA-2876</strain>
    </source>
</reference>
<reference key="6">
    <citation type="journal article" date="1999" name="Infect. Immun.">
        <title>Detection of Als proteins on the cell wall of Candida albicans in murine tissues.</title>
        <authorList>
            <person name="Hoyer L.L."/>
            <person name="Clevenger J."/>
            <person name="Hecht J.E."/>
            <person name="Ehrhart E.J."/>
            <person name="Poulet F.M."/>
        </authorList>
    </citation>
    <scope>SUBCELLULAR LOCATION</scope>
</reference>
<reference key="7">
    <citation type="journal article" date="2003" name="Yeast">
        <title>Genome-wide identification of fungal GPI proteins.</title>
        <authorList>
            <person name="De Groot P.W."/>
            <person name="Hellingwerf K.J."/>
            <person name="Klis F.M."/>
        </authorList>
    </citation>
    <scope>PREDICTION OF GPI-ANCHOR</scope>
</reference>
<reference key="8">
    <citation type="journal article" date="2004" name="J. Biol. Chem.">
        <title>Functional and structural diversity in the Als protein family of Candida albicans.</title>
        <authorList>
            <person name="Sheppard D.C."/>
            <person name="Yeaman M.R."/>
            <person name="Welch W.H."/>
            <person name="Phan Q.T."/>
            <person name="Fu Y."/>
            <person name="Ibrahim A.S."/>
            <person name="Filler S.G."/>
            <person name="Zhang M."/>
            <person name="Waring A.J."/>
            <person name="Edwards J.E. Jr."/>
        </authorList>
    </citation>
    <scope>FUNCTION</scope>
    <scope>DOMAIN</scope>
</reference>
<reference key="9">
    <citation type="journal article" date="2007" name="Med. Mycol.">
        <title>Candida albicans Als proteins mediate aggregation with bacteria and yeasts.</title>
        <authorList>
            <person name="Klotz S.A."/>
            <person name="Gaur N.K."/>
            <person name="De Armond R."/>
            <person name="Sheppard D."/>
            <person name="Khardori N."/>
            <person name="Edwards J.E. Jr."/>
            <person name="Lipke P.N."/>
            <person name="El-Azizi M."/>
        </authorList>
    </citation>
    <scope>FUNCTION</scope>
</reference>
<reference key="10">
    <citation type="journal article" date="2007" name="Mol. Cell. Proteomics">
        <title>Integrated proteomics and genomics strategies bring new insight into Candida albicans response upon macrophage interaction.</title>
        <authorList>
            <person name="Fernandez-Arenas E."/>
            <person name="Cabezon V."/>
            <person name="Bermejo C."/>
            <person name="Arroyo J."/>
            <person name="Nombela C."/>
            <person name="Diez-Orejas R."/>
            <person name="Gil C."/>
        </authorList>
    </citation>
    <scope>INDUCTION</scope>
</reference>
<reference key="11">
    <citation type="journal article" date="2010" name="BMC Microbiol.">
        <title>Real-time PCR expression profiling of genes encoding potential virulence factors in Candida albicans biofilms: identification of model-dependent and -independent gene expression.</title>
        <authorList>
            <person name="Nailis H."/>
            <person name="Kucharikova S."/>
            <person name="Ricicova M."/>
            <person name="Van Dijck P."/>
            <person name="Deforce D."/>
            <person name="Nelis H."/>
            <person name="Coenye T."/>
        </authorList>
    </citation>
    <scope>INDUCTION</scope>
</reference>
<reference key="12">
    <citation type="journal article" date="2012" name="FEMS Immunol. Med. Microbiol.">
        <title>Profiling of adhesive properties of the agglutinin-like sequence (ALS) protein family, a virulent attribute of Candida albicans.</title>
        <authorList>
            <person name="Aoki W."/>
            <person name="Kitahara N."/>
            <person name="Miura N."/>
            <person name="Morisaka H."/>
            <person name="Kuroda K."/>
            <person name="Ueda M."/>
        </authorList>
    </citation>
    <scope>FUNCTION</scope>
</reference>
<organism>
    <name type="scientific">Candida albicans (strain SC5314 / ATCC MYA-2876)</name>
    <name type="common">Yeast</name>
    <dbReference type="NCBI Taxonomy" id="237561"/>
    <lineage>
        <taxon>Eukaryota</taxon>
        <taxon>Fungi</taxon>
        <taxon>Dikarya</taxon>
        <taxon>Ascomycota</taxon>
        <taxon>Saccharomycotina</taxon>
        <taxon>Pichiomycetes</taxon>
        <taxon>Debaryomycetaceae</taxon>
        <taxon>Candida/Lodderomyces clade</taxon>
        <taxon>Candida</taxon>
    </lineage>
</organism>
<proteinExistence type="evidence at protein level"/>
<comment type="function">
    <text evidence="5 7 9">Cell surface adhesion protein which mediates both yeast-to-host tissue adherence and yeast aggregation. Plays an important role in the pathogenesis of C.albicans infections.</text>
</comment>
<comment type="subcellular location">
    <subcellularLocation>
        <location evidence="4">Cell membrane</location>
        <topology evidence="4">Lipid-anchor</topology>
        <topology evidence="4">GPI-anchor</topology>
    </subcellularLocation>
    <subcellularLocation>
        <location evidence="4">Secreted</location>
        <location evidence="4">Cell wall</location>
    </subcellularLocation>
    <text>Identified as covalently-linked GPI-modified cell wall protein (GPI-CWP) in the outer cell wall layer.</text>
</comment>
<comment type="induction">
    <text evidence="6 8">Highly expressed in biofilms and during candidiasis infection dissemination. Induced upon interaction with host macrophages.</text>
</comment>
<comment type="domain">
    <text evidence="5">Each ALS protein has a similar three-domain structure, including a N-ter domain of 433-436 amino acids that is 55-90 percent identical across the family and which mediates adherence to various materials; a central domain of variable numbers of tandemly repeated copies of a 36 amino acid motif; and a C-ter domain that is relatively variable in length and sequence across the family.</text>
</comment>
<comment type="PTM">
    <text>The GPI-anchor is attached to the protein in the endoplasmic reticulum and serves to target the protein to the cell surface. There, the glucosamine-inositol phospholipid moiety is cleaved off and the GPI-modified mannoprotein is covalently attached via its lipidless GPI glycan remnant to the 1,6-beta-glucan of the outer cell wall layer.</text>
</comment>
<comment type="similarity">
    <text evidence="11">Belongs to the ALS family.</text>
</comment>
<sequence length="1366" mass="142767">MKTVILLHLFFYCTIAMAKTISGVFTSFNSLTYTNTGNYPYGGPGYPTWTAVLGWSLDGTLASPGDTFTLVMPCVFKFITTQTSVDLTANGVKYATCTFHAGEDFTTFSSMSCVVNNGLSSNIRAFGTVRLPISFNVGGTGSSVNIQDSKCFTAGTNTVTFTDGDHKISTTVNFPKTPQSSSSLVYFARVIPSLDKLSSLVVASQCTAGYASGVLGFSATKDDVTIDCSTIHVGITNGLNSWNMPVSSESFSYTKTCTPNSFIITYENVPAGYRPFIDSYVKKSATATNGFNLNYTNIYNCMDGKKGNDPLIYFWTSYTNSDAGSNGAAVVVTTRTVTDSTTAITTLPFDPTVDKTKTIEVIEPIPTTTITTSYVGISTSLSTKTATIGGTATVVVDVPYHTTTTITSIWTGSATTSSTYTNPTDSIDTVVVQVPSPNPTVTTTQFWSGSVPTTETVTTGPQGTDSVIIKEPHNPTVTTTEFWSESFATTETVTNGPEGTDSVIVREPHNPTVTTTEFWSESFATTETVTNGPEGTDSVIVREPHNPTVTTTEFWSESFATTETITTGPLGTDSIVIHDPLEESSSSTAIESSDSNISSSAQESSSSVEQSLTSADETSSIVELSSSSDIPSSSIGLTSSESSTVSSYDSYSSSTSESSIASSYDSYWSSSIESSTLSSSDRYSSSISDTTSFWDSSSSDLESTSITWSSSIDAQSSHLVQSVSNSISTSQELSSSSSEESSTSATDALVSSDASSILSSDTSSYYPSSTISPSDDFPHTIAGESDSQSISFITSTVEISSDSVSLTSDPASSFDSSSSLNSDSSSSPSSDQSDILTSSSFSTLVVPSFSLSSSSSLSLTYPHYVNSTTYHASESESSSVASPSMASESANDDTHTLSESTDTTSSIGTDSSTVTFCRRDNGDGCIVTGMPSSSIDSEQTSDVTTTSSFVASSTPTSAEQSITDNPNIDSSQTSASSSTKLSVFVSDTVVNSISLSETSTLSSDDSTSSDTSISSTTNSDTGNINAGSSHTSTASIKESSIQKTGVMLSSSYLSTKLSSTSDITTELITTELTTTELTTIEDNEPNTFTSTPSSHSEIFSSDNSVLSKQVDGESTVEIPPVTDTTTVSSVSVHSIEASTATLGENSFSKVASAPVNTETSLRSTSSSSNHATESSGTVKSEASAEAIPSPPTSTDNRLSYSTEEAKGSTYANSGSTNNLMTESQVAAPTDSTSVLTANPVVTSTFDDKSSAAVNQPSKTKSIEESIGSLDSVNETNNGFIATLSQSEAPNSLIHSESISTTMAKTTDASINGDSAASNSQPTTLIQQVATSSYNQPLITTYAGSSSATKHPSWLLKFISVALFFFL</sequence>
<keyword id="KW-0130">Cell adhesion</keyword>
<keyword id="KW-1003">Cell membrane</keyword>
<keyword id="KW-0134">Cell wall</keyword>
<keyword id="KW-1015">Disulfide bond</keyword>
<keyword id="KW-0325">Glycoprotein</keyword>
<keyword id="KW-0336">GPI-anchor</keyword>
<keyword id="KW-0449">Lipoprotein</keyword>
<keyword id="KW-0472">Membrane</keyword>
<keyword id="KW-1185">Reference proteome</keyword>
<keyword id="KW-0677">Repeat</keyword>
<keyword id="KW-0964">Secreted</keyword>
<keyword id="KW-0732">Signal</keyword>
<keyword id="KW-0843">Virulence</keyword>
<dbReference type="EMBL" id="AY225310">
    <property type="protein sequence ID" value="AAO72081.1"/>
    <property type="molecule type" value="Genomic_DNA"/>
</dbReference>
<dbReference type="EMBL" id="EU444081">
    <property type="protein sequence ID" value="ACA42971.1"/>
    <property type="molecule type" value="Genomic_DNA"/>
</dbReference>
<dbReference type="EMBL" id="CP017625">
    <property type="protein sequence ID" value="AOW28626.1"/>
    <property type="molecule type" value="Genomic_DNA"/>
</dbReference>
<dbReference type="RefSeq" id="XP_716079.2">
    <property type="nucleotide sequence ID" value="XM_710986.2"/>
</dbReference>
<dbReference type="SMR" id="Q5A2Z7"/>
<dbReference type="GlyCosmos" id="Q5A2Z7">
    <property type="glycosylation" value="4 sites, No reported glycans"/>
</dbReference>
<dbReference type="GeneID" id="3642266"/>
<dbReference type="KEGG" id="cal:CAALFM_C306190CA"/>
<dbReference type="eggNOG" id="ENOG502RGCG">
    <property type="taxonomic scope" value="Eukaryota"/>
</dbReference>
<dbReference type="HOGENOM" id="CLU_257941_0_0_1"/>
<dbReference type="InParanoid" id="Q5A2Z7"/>
<dbReference type="OrthoDB" id="3981162at2759"/>
<dbReference type="Proteomes" id="UP000000559">
    <property type="component" value="Chromosome 3"/>
</dbReference>
<dbReference type="GO" id="GO:0009986">
    <property type="term" value="C:cell surface"/>
    <property type="evidence" value="ECO:0000318"/>
    <property type="project" value="GO_Central"/>
</dbReference>
<dbReference type="GO" id="GO:1903561">
    <property type="term" value="C:extracellular vesicle"/>
    <property type="evidence" value="ECO:0000318"/>
    <property type="project" value="GO_Central"/>
</dbReference>
<dbReference type="GO" id="GO:0030446">
    <property type="term" value="C:hyphal cell wall"/>
    <property type="evidence" value="ECO:0000318"/>
    <property type="project" value="GO_Central"/>
</dbReference>
<dbReference type="GO" id="GO:0005886">
    <property type="term" value="C:plasma membrane"/>
    <property type="evidence" value="ECO:0007669"/>
    <property type="project" value="UniProtKB-SubCell"/>
</dbReference>
<dbReference type="GO" id="GO:0098552">
    <property type="term" value="C:side of membrane"/>
    <property type="evidence" value="ECO:0007669"/>
    <property type="project" value="UniProtKB-KW"/>
</dbReference>
<dbReference type="GO" id="GO:0030445">
    <property type="term" value="C:yeast-form cell wall"/>
    <property type="evidence" value="ECO:0000318"/>
    <property type="project" value="GO_Central"/>
</dbReference>
<dbReference type="GO" id="GO:0043710">
    <property type="term" value="P:cell adhesion involved in multi-species biofilm formation"/>
    <property type="evidence" value="ECO:0000318"/>
    <property type="project" value="GO_Central"/>
</dbReference>
<dbReference type="GO" id="GO:0043709">
    <property type="term" value="P:cell adhesion involved in single-species biofilm formation"/>
    <property type="evidence" value="ECO:0000318"/>
    <property type="project" value="GO_Central"/>
</dbReference>
<dbReference type="GO" id="GO:0098609">
    <property type="term" value="P:cell-cell adhesion"/>
    <property type="evidence" value="ECO:0000318"/>
    <property type="project" value="GO_Central"/>
</dbReference>
<dbReference type="GO" id="GO:0030448">
    <property type="term" value="P:hyphal growth"/>
    <property type="evidence" value="ECO:0000318"/>
    <property type="project" value="GO_Central"/>
</dbReference>
<dbReference type="GO" id="GO:0044011">
    <property type="term" value="P:single-species biofilm formation on inanimate substrate"/>
    <property type="evidence" value="ECO:0000318"/>
    <property type="project" value="GO_Central"/>
</dbReference>
<dbReference type="FunFam" id="2.60.40.1280:FF:000001">
    <property type="entry name" value="Agglutinin-like protein 3"/>
    <property type="match status" value="1"/>
</dbReference>
<dbReference type="Gene3D" id="2.60.40.1280">
    <property type="match status" value="1"/>
</dbReference>
<dbReference type="Gene3D" id="2.60.40.2430">
    <property type="entry name" value="Agglutinin-like protein, N-terminal domain, N2 subdomain"/>
    <property type="match status" value="1"/>
</dbReference>
<dbReference type="InterPro" id="IPR008966">
    <property type="entry name" value="Adhesion_dom_sf"/>
</dbReference>
<dbReference type="InterPro" id="IPR008440">
    <property type="entry name" value="Agglutinin-like_ALS_rpt"/>
</dbReference>
<dbReference type="InterPro" id="IPR024672">
    <property type="entry name" value="Agglutinin-like_N"/>
</dbReference>
<dbReference type="InterPro" id="IPR043063">
    <property type="entry name" value="Agglutinin-like_N_N2"/>
</dbReference>
<dbReference type="InterPro" id="IPR033504">
    <property type="entry name" value="ALS"/>
</dbReference>
<dbReference type="InterPro" id="IPR011252">
    <property type="entry name" value="Fibrogen-bd_dom1"/>
</dbReference>
<dbReference type="PANTHER" id="PTHR33793:SF2">
    <property type="entry name" value="AGGLUTININ-LIKE PROTEIN 6"/>
    <property type="match status" value="1"/>
</dbReference>
<dbReference type="PANTHER" id="PTHR33793">
    <property type="entry name" value="ALPHA-AGGLUTININ"/>
    <property type="match status" value="1"/>
</dbReference>
<dbReference type="Pfam" id="PF05792">
    <property type="entry name" value="Candida_ALS"/>
    <property type="match status" value="6"/>
</dbReference>
<dbReference type="Pfam" id="PF11766">
    <property type="entry name" value="Candida_ALS_N"/>
    <property type="match status" value="1"/>
</dbReference>
<dbReference type="SMART" id="SM01056">
    <property type="entry name" value="Candida_ALS_N"/>
    <property type="match status" value="1"/>
</dbReference>
<dbReference type="SUPFAM" id="SSF49401">
    <property type="entry name" value="Bacterial adhesins"/>
    <property type="match status" value="1"/>
</dbReference>
<protein>
    <recommendedName>
        <fullName>Agglutinin-like protein 6</fullName>
    </recommendedName>
    <alternativeName>
        <fullName>Adhesin 6</fullName>
    </alternativeName>
</protein>
<evidence type="ECO:0000250" key="1">
    <source>
        <dbReference type="UniProtKB" id="A0A1D8PQ86"/>
    </source>
</evidence>
<evidence type="ECO:0000255" key="2"/>
<evidence type="ECO:0000256" key="3">
    <source>
        <dbReference type="SAM" id="MobiDB-lite"/>
    </source>
</evidence>
<evidence type="ECO:0000269" key="4">
    <source>
    </source>
</evidence>
<evidence type="ECO:0000269" key="5">
    <source>
    </source>
</evidence>
<evidence type="ECO:0000269" key="6">
    <source>
    </source>
</evidence>
<evidence type="ECO:0000269" key="7">
    <source>
    </source>
</evidence>
<evidence type="ECO:0000269" key="8">
    <source>
    </source>
</evidence>
<evidence type="ECO:0000269" key="9">
    <source>
    </source>
</evidence>
<evidence type="ECO:0000269" key="10">
    <source ref="2"/>
</evidence>
<evidence type="ECO:0000305" key="11"/>